<accession>Q2FIF6</accession>
<name>Y822_STAA3</name>
<reference key="1">
    <citation type="journal article" date="2006" name="Lancet">
        <title>Complete genome sequence of USA300, an epidemic clone of community-acquired meticillin-resistant Staphylococcus aureus.</title>
        <authorList>
            <person name="Diep B.A."/>
            <person name="Gill S.R."/>
            <person name="Chang R.F."/>
            <person name="Phan T.H."/>
            <person name="Chen J.H."/>
            <person name="Davidson M.G."/>
            <person name="Lin F."/>
            <person name="Lin J."/>
            <person name="Carleton H.A."/>
            <person name="Mongodin E.F."/>
            <person name="Sensabaugh G.F."/>
            <person name="Perdreau-Remington F."/>
        </authorList>
    </citation>
    <scope>NUCLEOTIDE SEQUENCE [LARGE SCALE GENOMIC DNA]</scope>
    <source>
        <strain>USA300</strain>
    </source>
</reference>
<evidence type="ECO:0000305" key="1"/>
<dbReference type="EMBL" id="CP000255">
    <property type="protein sequence ID" value="ABD20872.1"/>
    <property type="molecule type" value="Genomic_DNA"/>
</dbReference>
<dbReference type="SMR" id="Q2FIF6"/>
<dbReference type="KEGG" id="saa:SAUSA300_0822"/>
<dbReference type="HOGENOM" id="CLU_026231_0_1_9"/>
<dbReference type="OMA" id="YYSAPKQ"/>
<dbReference type="Proteomes" id="UP000001939">
    <property type="component" value="Chromosome"/>
</dbReference>
<dbReference type="GO" id="GO:0016226">
    <property type="term" value="P:iron-sulfur cluster assembly"/>
    <property type="evidence" value="ECO:0007669"/>
    <property type="project" value="InterPro"/>
</dbReference>
<dbReference type="InterPro" id="IPR055346">
    <property type="entry name" value="Fe-S_cluster_assembly_SufBD"/>
</dbReference>
<dbReference type="InterPro" id="IPR010231">
    <property type="entry name" value="SUF_FeS_clus_asmbl_SufB"/>
</dbReference>
<dbReference type="InterPro" id="IPR000825">
    <property type="entry name" value="SUF_FeS_clus_asmbl_SufBD_core"/>
</dbReference>
<dbReference type="InterPro" id="IPR037284">
    <property type="entry name" value="SUF_FeS_clus_asmbl_SufBD_sf"/>
</dbReference>
<dbReference type="InterPro" id="IPR045595">
    <property type="entry name" value="SufBD_N"/>
</dbReference>
<dbReference type="NCBIfam" id="TIGR01980">
    <property type="entry name" value="sufB"/>
    <property type="match status" value="1"/>
</dbReference>
<dbReference type="PANTHER" id="PTHR30508">
    <property type="entry name" value="FES CLUSTER ASSEMBLY PROTEIN SUF"/>
    <property type="match status" value="1"/>
</dbReference>
<dbReference type="PANTHER" id="PTHR30508:SF1">
    <property type="entry name" value="UPF0051 PROTEIN ABCI8, CHLOROPLASTIC-RELATED"/>
    <property type="match status" value="1"/>
</dbReference>
<dbReference type="Pfam" id="PF01458">
    <property type="entry name" value="SUFBD_core"/>
    <property type="match status" value="1"/>
</dbReference>
<dbReference type="Pfam" id="PF19295">
    <property type="entry name" value="SufBD_N"/>
    <property type="match status" value="1"/>
</dbReference>
<dbReference type="SUPFAM" id="SSF101960">
    <property type="entry name" value="Stabilizer of iron transporter SufD"/>
    <property type="match status" value="1"/>
</dbReference>
<feature type="chain" id="PRO_0000298958" description="Iron-sulfur cluster assembly SufBD family protein SAUSA300_0822">
    <location>
        <begin position="1"/>
        <end position="465"/>
    </location>
</feature>
<comment type="similarity">
    <text evidence="1">Belongs to the iron-sulfur cluster assembly SufBD family.</text>
</comment>
<sequence>MAKKAPDVGDYKYGFHDDDVSIFRSERGLTENIVREISNMKNEPEWMLDFRLKSLKLFYKMPMPQWGGDLSELNFDDITYYVKPSEQAERSWDEVPEEIKRTFDKLGIPEAEQKYLAGVSAQYESEVVYHNMEKELEEKGIIFKDTDSALQENEELFKKYFASVVPAADNKFAALNSAVWSGGSFIYVPKNIKLDTPLQAYFRINSENMGQFERTLIIADEGASVHYVEGCTAPVYTTSSLHSAVVEIIVHKDAHVRYTTIQNWANNVYNLVTKRTFVYENGNMEWVDGNLGSKLTMKYPNCVLLGEGAKGSTLSIAFAGKGQVQDAGAKMIHKAPNTSSTIVSKSISKNGGKVIYRGIVHFGRKAKGARSNIECDTLILDNESTSDTIPYNEVFNDQISLEHEAKVSKVSEEQLFYLMSRGISEEEATEMIVMGFIEPFTKELPMEYAVEMNRLIKFEMEGSIG</sequence>
<protein>
    <recommendedName>
        <fullName>Iron-sulfur cluster assembly SufBD family protein SAUSA300_0822</fullName>
    </recommendedName>
</protein>
<organism>
    <name type="scientific">Staphylococcus aureus (strain USA300)</name>
    <dbReference type="NCBI Taxonomy" id="367830"/>
    <lineage>
        <taxon>Bacteria</taxon>
        <taxon>Bacillati</taxon>
        <taxon>Bacillota</taxon>
        <taxon>Bacilli</taxon>
        <taxon>Bacillales</taxon>
        <taxon>Staphylococcaceae</taxon>
        <taxon>Staphylococcus</taxon>
    </lineage>
</organism>
<proteinExistence type="inferred from homology"/>
<gene>
    <name type="ordered locus">SAUSA300_0822</name>
</gene>